<protein>
    <recommendedName>
        <fullName evidence="7">UDP-glucose 4-epimerase 2</fullName>
        <shortName evidence="7">AtUGE2</shortName>
        <ecNumber evidence="3 5">5.1.3.2</ecNumber>
    </recommendedName>
    <alternativeName>
        <fullName evidence="8">UDP-galactose 4-epimerase 2</fullName>
    </alternativeName>
</protein>
<proteinExistence type="evidence at protein level"/>
<name>UGE2_ARATH</name>
<organism>
    <name type="scientific">Arabidopsis thaliana</name>
    <name type="common">Mouse-ear cress</name>
    <dbReference type="NCBI Taxonomy" id="3702"/>
    <lineage>
        <taxon>Eukaryota</taxon>
        <taxon>Viridiplantae</taxon>
        <taxon>Streptophyta</taxon>
        <taxon>Embryophyta</taxon>
        <taxon>Tracheophyta</taxon>
        <taxon>Spermatophyta</taxon>
        <taxon>Magnoliopsida</taxon>
        <taxon>eudicotyledons</taxon>
        <taxon>Gunneridae</taxon>
        <taxon>Pentapetalae</taxon>
        <taxon>rosids</taxon>
        <taxon>malvids</taxon>
        <taxon>Brassicales</taxon>
        <taxon>Brassicaceae</taxon>
        <taxon>Camelineae</taxon>
        <taxon>Arabidopsis</taxon>
    </lineage>
</organism>
<sequence>MAKSVLVTGGAGYIGSHTVLQLLEGGYSAVVVDNYDNSSAASLQRVKKLAGENGNRLSFHQVDLRDRPALEKIFSETKFDAVIHFAGLKAVGESVEKPLLYYNNNIVGTVTLLEVMAQYGCKNLVFSSSATVYGWPKEVPCTEESPISATNPYGRTKLFIEEICRDVHRSDSEWKIILLRYFNPVGAHPSGYIGEDPLGVPNNLMPYVQQVAVGRRPHLTVFGTDYKTKDGTGVRDYIHVMDLADGHIAALRKLDDLKISCEVYNLGTGNGTSVLEMVAAFEKASGKKIPLVMAGRRPGDAEVVYASTEKAERELNWKAKNGIEEMCRDLWNWASNNPYGYNSSSNGSSS</sequence>
<feature type="chain" id="PRO_0000183195" description="UDP-glucose 4-epimerase 2">
    <location>
        <begin position="1"/>
        <end position="350"/>
    </location>
</feature>
<feature type="active site" description="Proton acceptor" evidence="1">
    <location>
        <position position="153"/>
    </location>
</feature>
<feature type="binding site" evidence="1">
    <location>
        <begin position="12"/>
        <end position="14"/>
    </location>
    <ligand>
        <name>NAD(+)</name>
        <dbReference type="ChEBI" id="CHEBI:57540"/>
    </ligand>
</feature>
<feature type="binding site" evidence="1">
    <location>
        <begin position="33"/>
        <end position="37"/>
    </location>
    <ligand>
        <name>NAD(+)</name>
        <dbReference type="ChEBI" id="CHEBI:57540"/>
    </ligand>
</feature>
<feature type="binding site" evidence="1">
    <location>
        <begin position="63"/>
        <end position="64"/>
    </location>
    <ligand>
        <name>NAD(+)</name>
        <dbReference type="ChEBI" id="CHEBI:57540"/>
    </ligand>
</feature>
<feature type="binding site" evidence="1">
    <location>
        <position position="85"/>
    </location>
    <ligand>
        <name>NAD(+)</name>
        <dbReference type="ChEBI" id="CHEBI:57540"/>
    </ligand>
</feature>
<feature type="binding site" evidence="1">
    <location>
        <position position="89"/>
    </location>
    <ligand>
        <name>NAD(+)</name>
        <dbReference type="ChEBI" id="CHEBI:57540"/>
    </ligand>
</feature>
<feature type="binding site" evidence="1">
    <location>
        <begin position="129"/>
        <end position="131"/>
    </location>
    <ligand>
        <name>substrate</name>
    </ligand>
</feature>
<feature type="binding site" evidence="1">
    <location>
        <position position="157"/>
    </location>
    <ligand>
        <name>NAD(+)</name>
        <dbReference type="ChEBI" id="CHEBI:57540"/>
    </ligand>
</feature>
<feature type="binding site" evidence="1">
    <location>
        <begin position="181"/>
        <end position="183"/>
    </location>
    <ligand>
        <name>substrate</name>
    </ligand>
</feature>
<feature type="binding site" evidence="1">
    <location>
        <position position="181"/>
    </location>
    <ligand>
        <name>NAD(+)</name>
        <dbReference type="ChEBI" id="CHEBI:57540"/>
    </ligand>
</feature>
<feature type="binding site" evidence="1">
    <location>
        <begin position="202"/>
        <end position="204"/>
    </location>
    <ligand>
        <name>substrate</name>
    </ligand>
</feature>
<feature type="binding site" evidence="1">
    <location>
        <begin position="220"/>
        <end position="222"/>
    </location>
    <ligand>
        <name>substrate</name>
    </ligand>
</feature>
<feature type="binding site" evidence="1">
    <location>
        <position position="235"/>
    </location>
    <ligand>
        <name>substrate</name>
    </ligand>
</feature>
<feature type="binding site" evidence="1">
    <location>
        <begin position="297"/>
        <end position="300"/>
    </location>
    <ligand>
        <name>substrate</name>
    </ligand>
</feature>
<feature type="sequence conflict" description="In Ref. 5; AAM61178." evidence="9" ref="5">
    <original>G</original>
    <variation>R</variation>
    <location>
        <position position="54"/>
    </location>
</feature>
<feature type="sequence conflict" description="In Ref. 5; AAM61178." evidence="9" ref="5">
    <original>V</original>
    <variation>I</variation>
    <location>
        <position position="110"/>
    </location>
</feature>
<feature type="strand" evidence="12">
    <location>
        <begin position="4"/>
        <end position="8"/>
    </location>
</feature>
<feature type="turn" evidence="12">
    <location>
        <begin position="9"/>
        <end position="11"/>
    </location>
</feature>
<feature type="helix" evidence="12">
    <location>
        <begin position="13"/>
        <end position="24"/>
    </location>
</feature>
<feature type="strand" evidence="12">
    <location>
        <begin position="28"/>
        <end position="33"/>
    </location>
</feature>
<feature type="helix" evidence="12">
    <location>
        <begin position="41"/>
        <end position="49"/>
    </location>
</feature>
<feature type="helix" evidence="12">
    <location>
        <begin position="51"/>
        <end position="56"/>
    </location>
</feature>
<feature type="strand" evidence="12">
    <location>
        <begin position="57"/>
        <end position="61"/>
    </location>
</feature>
<feature type="helix" evidence="12">
    <location>
        <begin position="67"/>
        <end position="76"/>
    </location>
</feature>
<feature type="strand" evidence="12">
    <location>
        <begin position="80"/>
        <end position="84"/>
    </location>
</feature>
<feature type="helix" evidence="12">
    <location>
        <begin position="91"/>
        <end position="96"/>
    </location>
</feature>
<feature type="helix" evidence="12">
    <location>
        <begin position="98"/>
        <end position="118"/>
    </location>
</feature>
<feature type="strand" evidence="12">
    <location>
        <begin position="123"/>
        <end position="129"/>
    </location>
</feature>
<feature type="helix" evidence="12">
    <location>
        <begin position="130"/>
        <end position="132"/>
    </location>
</feature>
<feature type="strand" evidence="12">
    <location>
        <begin position="137"/>
        <end position="141"/>
    </location>
</feature>
<feature type="helix" evidence="12">
    <location>
        <begin position="152"/>
        <end position="170"/>
    </location>
</feature>
<feature type="strand" evidence="12">
    <location>
        <begin position="175"/>
        <end position="181"/>
    </location>
</feature>
<feature type="strand" evidence="12">
    <location>
        <begin position="183"/>
        <end position="185"/>
    </location>
</feature>
<feature type="strand" evidence="12">
    <location>
        <begin position="191"/>
        <end position="193"/>
    </location>
</feature>
<feature type="strand" evidence="12">
    <location>
        <begin position="198"/>
        <end position="200"/>
    </location>
</feature>
<feature type="helix" evidence="12">
    <location>
        <begin position="204"/>
        <end position="212"/>
    </location>
</feature>
<feature type="strand" evidence="12">
    <location>
        <begin position="215"/>
        <end position="217"/>
    </location>
</feature>
<feature type="strand" evidence="12">
    <location>
        <begin position="219"/>
        <end position="222"/>
    </location>
</feature>
<feature type="strand" evidence="12">
    <location>
        <begin position="226"/>
        <end position="232"/>
    </location>
</feature>
<feature type="strand" evidence="12">
    <location>
        <begin position="237"/>
        <end position="239"/>
    </location>
</feature>
<feature type="helix" evidence="12">
    <location>
        <begin position="240"/>
        <end position="253"/>
    </location>
</feature>
<feature type="strand" evidence="12">
    <location>
        <begin position="260"/>
        <end position="267"/>
    </location>
</feature>
<feature type="helix" evidence="12">
    <location>
        <begin position="274"/>
        <end position="285"/>
    </location>
</feature>
<feature type="strand" evidence="12">
    <location>
        <begin position="291"/>
        <end position="294"/>
    </location>
</feature>
<feature type="helix" evidence="12">
    <location>
        <begin position="309"/>
        <end position="315"/>
    </location>
</feature>
<feature type="helix" evidence="12">
    <location>
        <begin position="323"/>
        <end position="336"/>
    </location>
</feature>
<evidence type="ECO:0000250" key="1">
    <source>
        <dbReference type="UniProtKB" id="Q14376"/>
    </source>
</evidence>
<evidence type="ECO:0000269" key="2">
    <source>
    </source>
</evidence>
<evidence type="ECO:0000269" key="3">
    <source>
    </source>
</evidence>
<evidence type="ECO:0000269" key="4">
    <source>
    </source>
</evidence>
<evidence type="ECO:0000269" key="5">
    <source>
    </source>
</evidence>
<evidence type="ECO:0000269" key="6">
    <source ref="6"/>
</evidence>
<evidence type="ECO:0000303" key="7">
    <source>
    </source>
</evidence>
<evidence type="ECO:0000303" key="8">
    <source>
    </source>
</evidence>
<evidence type="ECO:0000305" key="9"/>
<evidence type="ECO:0000312" key="10">
    <source>
        <dbReference type="Araport" id="AT4G23920"/>
    </source>
</evidence>
<evidence type="ECO:0000312" key="11">
    <source>
        <dbReference type="EMBL" id="CAB43892.1"/>
    </source>
</evidence>
<evidence type="ECO:0007829" key="12">
    <source>
        <dbReference type="PDB" id="8WOV"/>
    </source>
</evidence>
<comment type="function">
    <text evidence="3 4 5 6">Catalyzes the interconversion between UDP-glucose and UDP-galactose (PubMed:16644739, PubMed:19754426, Ref.6). Cooperates with UGE3 in pollen development and with UGE4 in cell wall carbohydrate biosynthesis and growth (PubMed:17496119).</text>
</comment>
<comment type="catalytic activity">
    <reaction evidence="3 5">
        <text>UDP-alpha-D-glucose = UDP-alpha-D-galactose</text>
        <dbReference type="Rhea" id="RHEA:22168"/>
        <dbReference type="ChEBI" id="CHEBI:58885"/>
        <dbReference type="ChEBI" id="CHEBI:66914"/>
        <dbReference type="EC" id="5.1.3.2"/>
    </reaction>
</comment>
<comment type="cofactor">
    <cofactor evidence="3 5">
        <name>NAD(+)</name>
        <dbReference type="ChEBI" id="CHEBI:57540"/>
    </cofactor>
</comment>
<comment type="activity regulation">
    <text evidence="3">Enhanced activity by NaCl. Enhanced activity by NAD(+). Strongly inhibited by UDP.</text>
</comment>
<comment type="biophysicochemical properties">
    <kinetics>
        <KM evidence="3">0.09 mM for UDP-glucose</KM>
        <KM evidence="3">0.1 mM for UDP-galactose</KM>
        <KM evidence="5">0.095 mM for UDP-galactose</KM>
        <KM evidence="5">0.34 mM for UDP-xylose</KM>
    </kinetics>
    <phDependence>
        <text evidence="3">Optimum pH is 7.0-9.0.</text>
    </phDependence>
    <temperatureDependence>
        <text evidence="3">Optimum temperature is 40 degrees Celsius.</text>
    </temperatureDependence>
</comment>
<comment type="pathway">
    <text evidence="9">Carbohydrate metabolism; galactose metabolism.</text>
</comment>
<comment type="subunit">
    <text evidence="3">Forms homodimers and heterodimers.</text>
</comment>
<comment type="subcellular location">
    <subcellularLocation>
        <location evidence="3">Cytoplasm</location>
    </subcellularLocation>
</comment>
<comment type="tissue specificity">
    <text evidence="2 3 4 6">Widely expressed (PubMed:12419184, PubMed:16644739, PubMed:17496119, Ref.6). Most highly expressed in stems and flowers (PubMed:17496119).</text>
</comment>
<comment type="disruption phenotype">
    <text evidence="4">No visible phenotype under normal growth conditions. Uge2 and uge3 double mutant is almost completely sterile. Uge2 and uge4 double mutant displays a reduction in rosette and root growth, hypocotyl elongation, and secondary hypocotyl thickening.</text>
</comment>
<comment type="similarity">
    <text evidence="9">Belongs to the NAD(P)-dependent epimerase/dehydratase family.</text>
</comment>
<reference key="1">
    <citation type="journal article" date="1999" name="Nature">
        <title>Sequence and analysis of chromosome 4 of the plant Arabidopsis thaliana.</title>
        <authorList>
            <person name="Mayer K.F.X."/>
            <person name="Schueller C."/>
            <person name="Wambutt R."/>
            <person name="Murphy G."/>
            <person name="Volckaert G."/>
            <person name="Pohl T."/>
            <person name="Duesterhoeft A."/>
            <person name="Stiekema W."/>
            <person name="Entian K.-D."/>
            <person name="Terryn N."/>
            <person name="Harris B."/>
            <person name="Ansorge W."/>
            <person name="Brandt P."/>
            <person name="Grivell L.A."/>
            <person name="Rieger M."/>
            <person name="Weichselgartner M."/>
            <person name="de Simone V."/>
            <person name="Obermaier B."/>
            <person name="Mache R."/>
            <person name="Mueller M."/>
            <person name="Kreis M."/>
            <person name="Delseny M."/>
            <person name="Puigdomenech P."/>
            <person name="Watson M."/>
            <person name="Schmidtheini T."/>
            <person name="Reichert B."/>
            <person name="Portetelle D."/>
            <person name="Perez-Alonso M."/>
            <person name="Boutry M."/>
            <person name="Bancroft I."/>
            <person name="Vos P."/>
            <person name="Hoheisel J."/>
            <person name="Zimmermann W."/>
            <person name="Wedler H."/>
            <person name="Ridley P."/>
            <person name="Langham S.-A."/>
            <person name="McCullagh B."/>
            <person name="Bilham L."/>
            <person name="Robben J."/>
            <person name="van der Schueren J."/>
            <person name="Grymonprez B."/>
            <person name="Chuang Y.-J."/>
            <person name="Vandenbussche F."/>
            <person name="Braeken M."/>
            <person name="Weltjens I."/>
            <person name="Voet M."/>
            <person name="Bastiaens I."/>
            <person name="Aert R."/>
            <person name="Defoor E."/>
            <person name="Weitzenegger T."/>
            <person name="Bothe G."/>
            <person name="Ramsperger U."/>
            <person name="Hilbert H."/>
            <person name="Braun M."/>
            <person name="Holzer E."/>
            <person name="Brandt A."/>
            <person name="Peters S."/>
            <person name="van Staveren M."/>
            <person name="Dirkse W."/>
            <person name="Mooijman P."/>
            <person name="Klein Lankhorst R."/>
            <person name="Rose M."/>
            <person name="Hauf J."/>
            <person name="Koetter P."/>
            <person name="Berneiser S."/>
            <person name="Hempel S."/>
            <person name="Feldpausch M."/>
            <person name="Lamberth S."/>
            <person name="Van den Daele H."/>
            <person name="De Keyser A."/>
            <person name="Buysshaert C."/>
            <person name="Gielen J."/>
            <person name="Villarroel R."/>
            <person name="De Clercq R."/>
            <person name="van Montagu M."/>
            <person name="Rogers J."/>
            <person name="Cronin A."/>
            <person name="Quail M.A."/>
            <person name="Bray-Allen S."/>
            <person name="Clark L."/>
            <person name="Doggett J."/>
            <person name="Hall S."/>
            <person name="Kay M."/>
            <person name="Lennard N."/>
            <person name="McLay K."/>
            <person name="Mayes R."/>
            <person name="Pettett A."/>
            <person name="Rajandream M.A."/>
            <person name="Lyne M."/>
            <person name="Benes V."/>
            <person name="Rechmann S."/>
            <person name="Borkova D."/>
            <person name="Bloecker H."/>
            <person name="Scharfe M."/>
            <person name="Grimm M."/>
            <person name="Loehnert T.-H."/>
            <person name="Dose S."/>
            <person name="de Haan M."/>
            <person name="Maarse A.C."/>
            <person name="Schaefer M."/>
            <person name="Mueller-Auer S."/>
            <person name="Gabel C."/>
            <person name="Fuchs M."/>
            <person name="Fartmann B."/>
            <person name="Granderath K."/>
            <person name="Dauner D."/>
            <person name="Herzl A."/>
            <person name="Neumann S."/>
            <person name="Argiriou A."/>
            <person name="Vitale D."/>
            <person name="Liguori R."/>
            <person name="Piravandi E."/>
            <person name="Massenet O."/>
            <person name="Quigley F."/>
            <person name="Clabauld G."/>
            <person name="Muendlein A."/>
            <person name="Felber R."/>
            <person name="Schnabl S."/>
            <person name="Hiller R."/>
            <person name="Schmidt W."/>
            <person name="Lecharny A."/>
            <person name="Aubourg S."/>
            <person name="Chefdor F."/>
            <person name="Cooke R."/>
            <person name="Berger C."/>
            <person name="Monfort A."/>
            <person name="Casacuberta E."/>
            <person name="Gibbons T."/>
            <person name="Weber N."/>
            <person name="Vandenbol M."/>
            <person name="Bargues M."/>
            <person name="Terol J."/>
            <person name="Torres A."/>
            <person name="Perez-Perez A."/>
            <person name="Purnelle B."/>
            <person name="Bent E."/>
            <person name="Johnson S."/>
            <person name="Tacon D."/>
            <person name="Jesse T."/>
            <person name="Heijnen L."/>
            <person name="Schwarz S."/>
            <person name="Scholler P."/>
            <person name="Heber S."/>
            <person name="Francs P."/>
            <person name="Bielke C."/>
            <person name="Frishman D."/>
            <person name="Haase D."/>
            <person name="Lemcke K."/>
            <person name="Mewes H.-W."/>
            <person name="Stocker S."/>
            <person name="Zaccaria P."/>
            <person name="Bevan M."/>
            <person name="Wilson R.K."/>
            <person name="de la Bastide M."/>
            <person name="Habermann K."/>
            <person name="Parnell L."/>
            <person name="Dedhia N."/>
            <person name="Gnoj L."/>
            <person name="Schutz K."/>
            <person name="Huang E."/>
            <person name="Spiegel L."/>
            <person name="Sekhon M."/>
            <person name="Murray J."/>
            <person name="Sheet P."/>
            <person name="Cordes M."/>
            <person name="Abu-Threideh J."/>
            <person name="Stoneking T."/>
            <person name="Kalicki J."/>
            <person name="Graves T."/>
            <person name="Harmon G."/>
            <person name="Edwards J."/>
            <person name="Latreille P."/>
            <person name="Courtney L."/>
            <person name="Cloud J."/>
            <person name="Abbott A."/>
            <person name="Scott K."/>
            <person name="Johnson D."/>
            <person name="Minx P."/>
            <person name="Bentley D."/>
            <person name="Fulton B."/>
            <person name="Miller N."/>
            <person name="Greco T."/>
            <person name="Kemp K."/>
            <person name="Kramer J."/>
            <person name="Fulton L."/>
            <person name="Mardis E."/>
            <person name="Dante M."/>
            <person name="Pepin K."/>
            <person name="Hillier L.W."/>
            <person name="Nelson J."/>
            <person name="Spieth J."/>
            <person name="Ryan E."/>
            <person name="Andrews S."/>
            <person name="Geisel C."/>
            <person name="Layman D."/>
            <person name="Du H."/>
            <person name="Ali J."/>
            <person name="Berghoff A."/>
            <person name="Jones K."/>
            <person name="Drone K."/>
            <person name="Cotton M."/>
            <person name="Joshu C."/>
            <person name="Antonoiu B."/>
            <person name="Zidanic M."/>
            <person name="Strong C."/>
            <person name="Sun H."/>
            <person name="Lamar B."/>
            <person name="Yordan C."/>
            <person name="Ma P."/>
            <person name="Zhong J."/>
            <person name="Preston R."/>
            <person name="Vil D."/>
            <person name="Shekher M."/>
            <person name="Matero A."/>
            <person name="Shah R."/>
            <person name="Swaby I.K."/>
            <person name="O'Shaughnessy A."/>
            <person name="Rodriguez M."/>
            <person name="Hoffman J."/>
            <person name="Till S."/>
            <person name="Granat S."/>
            <person name="Shohdy N."/>
            <person name="Hasegawa A."/>
            <person name="Hameed A."/>
            <person name="Lodhi M."/>
            <person name="Johnson A."/>
            <person name="Chen E."/>
            <person name="Marra M.A."/>
            <person name="Martienssen R."/>
            <person name="McCombie W.R."/>
        </authorList>
    </citation>
    <scope>NUCLEOTIDE SEQUENCE [LARGE SCALE GENOMIC DNA]</scope>
    <source>
        <strain>cv. Columbia</strain>
    </source>
</reference>
<reference key="2">
    <citation type="journal article" date="2017" name="Plant J.">
        <title>Araport11: a complete reannotation of the Arabidopsis thaliana reference genome.</title>
        <authorList>
            <person name="Cheng C.Y."/>
            <person name="Krishnakumar V."/>
            <person name="Chan A.P."/>
            <person name="Thibaud-Nissen F."/>
            <person name="Schobel S."/>
            <person name="Town C.D."/>
        </authorList>
    </citation>
    <scope>GENOME REANNOTATION</scope>
    <source>
        <strain>cv. Columbia</strain>
    </source>
</reference>
<reference key="3">
    <citation type="journal article" date="2002" name="Science">
        <title>Functional annotation of a full-length Arabidopsis cDNA collection.</title>
        <authorList>
            <person name="Seki M."/>
            <person name="Narusaka M."/>
            <person name="Kamiya A."/>
            <person name="Ishida J."/>
            <person name="Satou M."/>
            <person name="Sakurai T."/>
            <person name="Nakajima M."/>
            <person name="Enju A."/>
            <person name="Akiyama K."/>
            <person name="Oono Y."/>
            <person name="Muramatsu M."/>
            <person name="Hayashizaki Y."/>
            <person name="Kawai J."/>
            <person name="Carninci P."/>
            <person name="Itoh M."/>
            <person name="Ishii Y."/>
            <person name="Arakawa T."/>
            <person name="Shibata K."/>
            <person name="Shinagawa A."/>
            <person name="Shinozaki K."/>
        </authorList>
    </citation>
    <scope>NUCLEOTIDE SEQUENCE [LARGE SCALE MRNA]</scope>
    <source>
        <strain>cv. Columbia</strain>
    </source>
</reference>
<reference key="4">
    <citation type="journal article" date="2003" name="Science">
        <title>Empirical analysis of transcriptional activity in the Arabidopsis genome.</title>
        <authorList>
            <person name="Yamada K."/>
            <person name="Lim J."/>
            <person name="Dale J.M."/>
            <person name="Chen H."/>
            <person name="Shinn P."/>
            <person name="Palm C.J."/>
            <person name="Southwick A.M."/>
            <person name="Wu H.C."/>
            <person name="Kim C.J."/>
            <person name="Nguyen M."/>
            <person name="Pham P.K."/>
            <person name="Cheuk R.F."/>
            <person name="Karlin-Newmann G."/>
            <person name="Liu S.X."/>
            <person name="Lam B."/>
            <person name="Sakano H."/>
            <person name="Wu T."/>
            <person name="Yu G."/>
            <person name="Miranda M."/>
            <person name="Quach H.L."/>
            <person name="Tripp M."/>
            <person name="Chang C.H."/>
            <person name="Lee J.M."/>
            <person name="Toriumi M.J."/>
            <person name="Chan M.M."/>
            <person name="Tang C.C."/>
            <person name="Onodera C.S."/>
            <person name="Deng J.M."/>
            <person name="Akiyama K."/>
            <person name="Ansari Y."/>
            <person name="Arakawa T."/>
            <person name="Banh J."/>
            <person name="Banno F."/>
            <person name="Bowser L."/>
            <person name="Brooks S.Y."/>
            <person name="Carninci P."/>
            <person name="Chao Q."/>
            <person name="Choy N."/>
            <person name="Enju A."/>
            <person name="Goldsmith A.D."/>
            <person name="Gurjal M."/>
            <person name="Hansen N.F."/>
            <person name="Hayashizaki Y."/>
            <person name="Johnson-Hopson C."/>
            <person name="Hsuan V.W."/>
            <person name="Iida K."/>
            <person name="Karnes M."/>
            <person name="Khan S."/>
            <person name="Koesema E."/>
            <person name="Ishida J."/>
            <person name="Jiang P.X."/>
            <person name="Jones T."/>
            <person name="Kawai J."/>
            <person name="Kamiya A."/>
            <person name="Meyers C."/>
            <person name="Nakajima M."/>
            <person name="Narusaka M."/>
            <person name="Seki M."/>
            <person name="Sakurai T."/>
            <person name="Satou M."/>
            <person name="Tamse R."/>
            <person name="Vaysberg M."/>
            <person name="Wallender E.K."/>
            <person name="Wong C."/>
            <person name="Yamamura Y."/>
            <person name="Yuan S."/>
            <person name="Shinozaki K."/>
            <person name="Davis R.W."/>
            <person name="Theologis A."/>
            <person name="Ecker J.R."/>
        </authorList>
    </citation>
    <scope>NUCLEOTIDE SEQUENCE [LARGE SCALE MRNA]</scope>
    <source>
        <strain>cv. Columbia</strain>
    </source>
</reference>
<reference key="5">
    <citation type="submission" date="2002-03" db="EMBL/GenBank/DDBJ databases">
        <title>Full-length cDNA from Arabidopsis thaliana.</title>
        <authorList>
            <person name="Brover V.V."/>
            <person name="Troukhan M.E."/>
            <person name="Alexandrov N.A."/>
            <person name="Lu Y.-P."/>
            <person name="Flavell R.B."/>
            <person name="Feldmann K.A."/>
        </authorList>
    </citation>
    <scope>NUCLEOTIDE SEQUENCE [LARGE SCALE MRNA]</scope>
</reference>
<reference key="6">
    <citation type="book" date="2001" name="Proceedings of the 12th international conference on Arabidopsis research">
        <title>Genetic and biochemical characterization of UDP sugar 4-epimerases in Arabidopsis thaliana.</title>
        <authorList>
            <person name="Verma R."/>
            <person name="Burget E.G."/>
            <person name="Reiter W.-D."/>
        </authorList>
    </citation>
    <scope>TISSUE SPECIFICITY</scope>
    <scope>FUNCTION</scope>
</reference>
<reference key="7">
    <citation type="journal article" date="2001" name="Plant Mol. Biol.">
        <title>Molecular genetics of nucleotide sugar interconversion pathways in plants.</title>
        <authorList>
            <person name="Reiter W.-D."/>
            <person name="Vanzin G.F."/>
        </authorList>
    </citation>
    <scope>GENE FAMILY</scope>
</reference>
<reference key="8">
    <citation type="journal article" date="2002" name="Curr. Biol.">
        <title>Galactose biosynthesis in Arabidopsis: genetic evidence for substrate channeling from UDP-D-galactose into cell wall polymers.</title>
        <authorList>
            <person name="Seifert G.J."/>
            <person name="Barber C."/>
            <person name="Wells B."/>
            <person name="Dolan L."/>
            <person name="Roberts K."/>
        </authorList>
    </citation>
    <scope>GENE FAMILY</scope>
    <scope>TISSUE SPECIFICITY</scope>
</reference>
<reference key="9">
    <citation type="journal article" date="2006" name="J. Biol. Chem.">
        <title>Distinct properties of the five UDP-D-glucose/UDP-D-galactose 4-epimerase isoforms of Arabidopsis thaliana.</title>
        <authorList>
            <person name="Barber C."/>
            <person name="Roesti J."/>
            <person name="Rawat A."/>
            <person name="Findlay K."/>
            <person name="Roberts K."/>
            <person name="Seifert G.J."/>
        </authorList>
    </citation>
    <scope>FUNCTION</scope>
    <scope>SUBUNIT</scope>
    <scope>CATALYTIC ACTIVITY</scope>
    <scope>BIOPHYSICOCHEMICAL PROPERTIES</scope>
    <scope>ACTIVITY REGULATION</scope>
    <scope>TISSUE SPECIFICITY</scope>
    <scope>SUBCELLULAR LOCATION</scope>
</reference>
<reference key="10">
    <citation type="journal article" date="2007" name="Plant Cell">
        <title>UDP-glucose 4-epimerase isoforms UGE2 and UGE4 cooperate in providing UDP-galactose for cell wall biosynthesis and growth of Arabidopsis thaliana.</title>
        <authorList>
            <person name="Roesti J."/>
            <person name="Barton C.J."/>
            <person name="Albrecht S."/>
            <person name="Dupree P."/>
            <person name="Pauly M."/>
            <person name="Findlay K."/>
            <person name="Roberts K."/>
            <person name="Seifert G.J."/>
        </authorList>
    </citation>
    <scope>TISSUE SPECIFICITY</scope>
    <scope>DISRUPTION PHENOTYPE</scope>
    <scope>FUNCTION</scope>
</reference>
<reference key="11">
    <citation type="journal article" date="2009" name="Biochem. J.">
        <title>Bifunctional cytosolic UDP-glucose 4-epimerases catalyse the interconversion between UDP-D-xylose and UDP-L-arabinose in plants.</title>
        <authorList>
            <person name="Kotake T."/>
            <person name="Takata R."/>
            <person name="Verma R."/>
            <person name="Takaba M."/>
            <person name="Yamaguchi D."/>
            <person name="Orita T."/>
            <person name="Kaneko S."/>
            <person name="Matsuoka K."/>
            <person name="Koyama T."/>
            <person name="Reiter W.D."/>
            <person name="Tsumuraya Y."/>
        </authorList>
    </citation>
    <scope>FUNCTION</scope>
    <scope>CATALYTIC ACTIVITY</scope>
    <scope>COFACTOR</scope>
    <scope>BIOPHYSICOCHEMICAL PROPERTIES</scope>
</reference>
<gene>
    <name evidence="7" type="primary">UGE2</name>
    <name evidence="10" type="ordered locus">At4g23920</name>
    <name evidence="11" type="ORF">T32A16.90</name>
</gene>
<accession>Q9T0A7</accession>
<accession>Q541V9</accession>
<accession>Q8LFW1</accession>
<dbReference type="EC" id="5.1.3.2" evidence="3 5"/>
<dbReference type="EMBL" id="AL078468">
    <property type="protein sequence ID" value="CAB43892.1"/>
    <property type="molecule type" value="Genomic_DNA"/>
</dbReference>
<dbReference type="EMBL" id="AL161560">
    <property type="protein sequence ID" value="CAB81310.1"/>
    <property type="molecule type" value="Genomic_DNA"/>
</dbReference>
<dbReference type="EMBL" id="CP002687">
    <property type="protein sequence ID" value="AEE84827.1"/>
    <property type="molecule type" value="Genomic_DNA"/>
</dbReference>
<dbReference type="EMBL" id="AK118722">
    <property type="protein sequence ID" value="BAC43316.1"/>
    <property type="molecule type" value="mRNA"/>
</dbReference>
<dbReference type="EMBL" id="BT008539">
    <property type="protein sequence ID" value="AAP40366.1"/>
    <property type="molecule type" value="mRNA"/>
</dbReference>
<dbReference type="EMBL" id="AY084615">
    <property type="protein sequence ID" value="AAM61178.1"/>
    <property type="molecule type" value="mRNA"/>
</dbReference>
<dbReference type="PIR" id="T08911">
    <property type="entry name" value="T08911"/>
</dbReference>
<dbReference type="RefSeq" id="NP_194123.1">
    <property type="nucleotide sequence ID" value="NM_118524.3"/>
</dbReference>
<dbReference type="PDB" id="8WOP">
    <property type="method" value="X-ray"/>
    <property type="resolution" value="2.35 A"/>
    <property type="chains" value="A/B=1-350"/>
</dbReference>
<dbReference type="PDB" id="8WOV">
    <property type="method" value="X-ray"/>
    <property type="resolution" value="2.25 A"/>
    <property type="chains" value="A/B=1-350"/>
</dbReference>
<dbReference type="PDB" id="8WOW">
    <property type="method" value="X-ray"/>
    <property type="resolution" value="2.60 A"/>
    <property type="chains" value="A/B=1-350"/>
</dbReference>
<dbReference type="PDBsum" id="8WOP"/>
<dbReference type="PDBsum" id="8WOV"/>
<dbReference type="PDBsum" id="8WOW"/>
<dbReference type="SMR" id="Q9T0A7"/>
<dbReference type="BioGRID" id="13781">
    <property type="interactions" value="3"/>
</dbReference>
<dbReference type="FunCoup" id="Q9T0A7">
    <property type="interactions" value="1274"/>
</dbReference>
<dbReference type="IntAct" id="Q9T0A7">
    <property type="interactions" value="2"/>
</dbReference>
<dbReference type="STRING" id="3702.Q9T0A7"/>
<dbReference type="PaxDb" id="3702-AT4G23920.1"/>
<dbReference type="ProteomicsDB" id="245259"/>
<dbReference type="EnsemblPlants" id="AT4G23920.1">
    <property type="protein sequence ID" value="AT4G23920.1"/>
    <property type="gene ID" value="AT4G23920"/>
</dbReference>
<dbReference type="GeneID" id="828492"/>
<dbReference type="Gramene" id="AT4G23920.1">
    <property type="protein sequence ID" value="AT4G23920.1"/>
    <property type="gene ID" value="AT4G23920"/>
</dbReference>
<dbReference type="KEGG" id="ath:AT4G23920"/>
<dbReference type="Araport" id="AT4G23920"/>
<dbReference type="TAIR" id="AT4G23920">
    <property type="gene designation" value="UGE2"/>
</dbReference>
<dbReference type="eggNOG" id="KOG1371">
    <property type="taxonomic scope" value="Eukaryota"/>
</dbReference>
<dbReference type="HOGENOM" id="CLU_007383_1_10_1"/>
<dbReference type="InParanoid" id="Q9T0A7"/>
<dbReference type="OMA" id="GEHLICN"/>
<dbReference type="PhylomeDB" id="Q9T0A7"/>
<dbReference type="BRENDA" id="5.1.3.2">
    <property type="organism ID" value="399"/>
</dbReference>
<dbReference type="BRENDA" id="5.1.3.5">
    <property type="organism ID" value="399"/>
</dbReference>
<dbReference type="SABIO-RK" id="Q9T0A7"/>
<dbReference type="UniPathway" id="UPA00214"/>
<dbReference type="PRO" id="PR:Q9T0A7"/>
<dbReference type="Proteomes" id="UP000006548">
    <property type="component" value="Chromosome 4"/>
</dbReference>
<dbReference type="ExpressionAtlas" id="Q9T0A7">
    <property type="expression patterns" value="baseline and differential"/>
</dbReference>
<dbReference type="GO" id="GO:0005829">
    <property type="term" value="C:cytosol"/>
    <property type="evidence" value="ECO:0000314"/>
    <property type="project" value="TAIR"/>
</dbReference>
<dbReference type="GO" id="GO:1901149">
    <property type="term" value="F:salicylic acid binding"/>
    <property type="evidence" value="ECO:0007005"/>
    <property type="project" value="TAIR"/>
</dbReference>
<dbReference type="GO" id="GO:0003978">
    <property type="term" value="F:UDP-glucose 4-epimerase activity"/>
    <property type="evidence" value="ECO:0000314"/>
    <property type="project" value="TAIR"/>
</dbReference>
<dbReference type="GO" id="GO:0042546">
    <property type="term" value="P:cell wall biogenesis"/>
    <property type="evidence" value="ECO:0000315"/>
    <property type="project" value="TAIR"/>
</dbReference>
<dbReference type="GO" id="GO:0071555">
    <property type="term" value="P:cell wall organization"/>
    <property type="evidence" value="ECO:0007669"/>
    <property type="project" value="UniProtKB-KW"/>
</dbReference>
<dbReference type="GO" id="GO:0006012">
    <property type="term" value="P:galactose metabolic process"/>
    <property type="evidence" value="ECO:0007669"/>
    <property type="project" value="UniProtKB-UniPathway"/>
</dbReference>
<dbReference type="CDD" id="cd05247">
    <property type="entry name" value="UDP_G4E_1_SDR_e"/>
    <property type="match status" value="1"/>
</dbReference>
<dbReference type="FunFam" id="3.40.50.720:FF:000040">
    <property type="entry name" value="UDP-glucose 4-epimerase"/>
    <property type="match status" value="1"/>
</dbReference>
<dbReference type="FunFam" id="3.90.25.10:FF:000060">
    <property type="entry name" value="UDP-glucose 4-epimerase 4"/>
    <property type="match status" value="1"/>
</dbReference>
<dbReference type="Gene3D" id="3.40.50.720">
    <property type="entry name" value="NAD(P)-binding Rossmann-like Domain"/>
    <property type="match status" value="1"/>
</dbReference>
<dbReference type="Gene3D" id="3.90.25.10">
    <property type="entry name" value="UDP-galactose 4-epimerase, domain 1"/>
    <property type="match status" value="1"/>
</dbReference>
<dbReference type="InterPro" id="IPR016040">
    <property type="entry name" value="NAD(P)-bd_dom"/>
</dbReference>
<dbReference type="InterPro" id="IPR036291">
    <property type="entry name" value="NAD(P)-bd_dom_sf"/>
</dbReference>
<dbReference type="InterPro" id="IPR005886">
    <property type="entry name" value="UDP_G4E"/>
</dbReference>
<dbReference type="NCBIfam" id="TIGR01179">
    <property type="entry name" value="galE"/>
    <property type="match status" value="1"/>
</dbReference>
<dbReference type="NCBIfam" id="NF007956">
    <property type="entry name" value="PRK10675.1"/>
    <property type="match status" value="1"/>
</dbReference>
<dbReference type="PANTHER" id="PTHR43725">
    <property type="entry name" value="UDP-GLUCOSE 4-EPIMERASE"/>
    <property type="match status" value="1"/>
</dbReference>
<dbReference type="PANTHER" id="PTHR43725:SF44">
    <property type="entry name" value="UDP-GLUCOSE 4-EPIMERASE 2"/>
    <property type="match status" value="1"/>
</dbReference>
<dbReference type="Pfam" id="PF16363">
    <property type="entry name" value="GDP_Man_Dehyd"/>
    <property type="match status" value="1"/>
</dbReference>
<dbReference type="SUPFAM" id="SSF51735">
    <property type="entry name" value="NAD(P)-binding Rossmann-fold domains"/>
    <property type="match status" value="1"/>
</dbReference>
<keyword id="KW-0002">3D-structure</keyword>
<keyword id="KW-0119">Carbohydrate metabolism</keyword>
<keyword id="KW-0961">Cell wall biogenesis/degradation</keyword>
<keyword id="KW-0963">Cytoplasm</keyword>
<keyword id="KW-0299">Galactose metabolism</keyword>
<keyword id="KW-0413">Isomerase</keyword>
<keyword id="KW-0520">NAD</keyword>
<keyword id="KW-1185">Reference proteome</keyword>